<feature type="chain" id="PRO_0000120639" description="NAD kinase">
    <location>
        <begin position="1"/>
        <end position="296"/>
    </location>
</feature>
<feature type="active site" description="Proton acceptor" evidence="1">
    <location>
        <position position="78"/>
    </location>
</feature>
<feature type="binding site" evidence="1">
    <location>
        <begin position="78"/>
        <end position="79"/>
    </location>
    <ligand>
        <name>NAD(+)</name>
        <dbReference type="ChEBI" id="CHEBI:57540"/>
    </ligand>
</feature>
<feature type="binding site" evidence="1">
    <location>
        <begin position="152"/>
        <end position="153"/>
    </location>
    <ligand>
        <name>NAD(+)</name>
        <dbReference type="ChEBI" id="CHEBI:57540"/>
    </ligand>
</feature>
<feature type="binding site" evidence="1">
    <location>
        <position position="180"/>
    </location>
    <ligand>
        <name>NAD(+)</name>
        <dbReference type="ChEBI" id="CHEBI:57540"/>
    </ligand>
</feature>
<feature type="binding site" evidence="1">
    <location>
        <position position="182"/>
    </location>
    <ligand>
        <name>NAD(+)</name>
        <dbReference type="ChEBI" id="CHEBI:57540"/>
    </ligand>
</feature>
<feature type="binding site" evidence="1">
    <location>
        <position position="251"/>
    </location>
    <ligand>
        <name>NAD(+)</name>
        <dbReference type="ChEBI" id="CHEBI:57540"/>
    </ligand>
</feature>
<accession>P65772</accession>
<accession>A1IR54</accession>
<accession>Q9JQL9</accession>
<reference key="1">
    <citation type="journal article" date="2000" name="Nature">
        <title>Complete DNA sequence of a serogroup A strain of Neisseria meningitidis Z2491.</title>
        <authorList>
            <person name="Parkhill J."/>
            <person name="Achtman M."/>
            <person name="James K.D."/>
            <person name="Bentley S.D."/>
            <person name="Churcher C.M."/>
            <person name="Klee S.R."/>
            <person name="Morelli G."/>
            <person name="Basham D."/>
            <person name="Brown D."/>
            <person name="Chillingworth T."/>
            <person name="Davies R.M."/>
            <person name="Davis P."/>
            <person name="Devlin K."/>
            <person name="Feltwell T."/>
            <person name="Hamlin N."/>
            <person name="Holroyd S."/>
            <person name="Jagels K."/>
            <person name="Leather S."/>
            <person name="Moule S."/>
            <person name="Mungall K.L."/>
            <person name="Quail M.A."/>
            <person name="Rajandream M.A."/>
            <person name="Rutherford K.M."/>
            <person name="Simmonds M."/>
            <person name="Skelton J."/>
            <person name="Whitehead S."/>
            <person name="Spratt B.G."/>
            <person name="Barrell B.G."/>
        </authorList>
    </citation>
    <scope>NUCLEOTIDE SEQUENCE [LARGE SCALE GENOMIC DNA]</scope>
    <source>
        <strain>DSM 15465 / Z2491</strain>
    </source>
</reference>
<protein>
    <recommendedName>
        <fullName evidence="1">NAD kinase</fullName>
        <ecNumber evidence="1">2.7.1.23</ecNumber>
    </recommendedName>
    <alternativeName>
        <fullName evidence="1">ATP-dependent NAD kinase</fullName>
    </alternativeName>
</protein>
<sequence length="296" mass="32853">MNSPFHNIGIVTRPNTPDIQDTAHTLITFLKQHGFTVYLDEVGIKEGCIYTQDTVGCHIVNKTELGQYCDLVAVLGGDGTFLSVAREIALRAVPIIGINQGHLGFLTQIPREYMTDKLLPVLEGKYLAEERILIEAALIREGKTAERAIALNDAVLSRGGAGQMIEFEVFVNREFVYTQRSDGLIVSTPTGSTAYSLAAGGPIMQAGLHAFTLVPICPQSMTNRPIAIPDTSEIEILVTQGGDARVHFDGQTHIDVQNLDRITIRRYRNPLRILHPTDYQYFKTLRQKLHWGEQLV</sequence>
<name>NADK_NEIMA</name>
<dbReference type="EC" id="2.7.1.23" evidence="1"/>
<dbReference type="EMBL" id="AL157959">
    <property type="protein sequence ID" value="CAM08238.1"/>
    <property type="molecule type" value="Genomic_DNA"/>
</dbReference>
<dbReference type="RefSeq" id="WP_002213954.1">
    <property type="nucleotide sequence ID" value="NC_003116.1"/>
</dbReference>
<dbReference type="SMR" id="P65772"/>
<dbReference type="EnsemblBacteria" id="CAM08238">
    <property type="protein sequence ID" value="CAM08238"/>
    <property type="gene ID" value="NMA1017"/>
</dbReference>
<dbReference type="KEGG" id="nma:NMA1017"/>
<dbReference type="HOGENOM" id="CLU_008831_0_1_4"/>
<dbReference type="Proteomes" id="UP000000626">
    <property type="component" value="Chromosome"/>
</dbReference>
<dbReference type="GO" id="GO:0005737">
    <property type="term" value="C:cytoplasm"/>
    <property type="evidence" value="ECO:0007669"/>
    <property type="project" value="UniProtKB-SubCell"/>
</dbReference>
<dbReference type="GO" id="GO:0005524">
    <property type="term" value="F:ATP binding"/>
    <property type="evidence" value="ECO:0007669"/>
    <property type="project" value="UniProtKB-KW"/>
</dbReference>
<dbReference type="GO" id="GO:0046872">
    <property type="term" value="F:metal ion binding"/>
    <property type="evidence" value="ECO:0007669"/>
    <property type="project" value="UniProtKB-UniRule"/>
</dbReference>
<dbReference type="GO" id="GO:0051287">
    <property type="term" value="F:NAD binding"/>
    <property type="evidence" value="ECO:0007669"/>
    <property type="project" value="UniProtKB-ARBA"/>
</dbReference>
<dbReference type="GO" id="GO:0003951">
    <property type="term" value="F:NAD+ kinase activity"/>
    <property type="evidence" value="ECO:0007669"/>
    <property type="project" value="UniProtKB-UniRule"/>
</dbReference>
<dbReference type="GO" id="GO:0019674">
    <property type="term" value="P:NAD metabolic process"/>
    <property type="evidence" value="ECO:0007669"/>
    <property type="project" value="InterPro"/>
</dbReference>
<dbReference type="GO" id="GO:0006741">
    <property type="term" value="P:NADP biosynthetic process"/>
    <property type="evidence" value="ECO:0007669"/>
    <property type="project" value="UniProtKB-UniRule"/>
</dbReference>
<dbReference type="FunFam" id="2.60.200.30:FF:000011">
    <property type="entry name" value="NAD kinase"/>
    <property type="match status" value="1"/>
</dbReference>
<dbReference type="Gene3D" id="3.40.50.10330">
    <property type="entry name" value="Probable inorganic polyphosphate/atp-NAD kinase, domain 1"/>
    <property type="match status" value="1"/>
</dbReference>
<dbReference type="Gene3D" id="2.60.200.30">
    <property type="entry name" value="Probable inorganic polyphosphate/atp-NAD kinase, domain 2"/>
    <property type="match status" value="1"/>
</dbReference>
<dbReference type="HAMAP" id="MF_00361">
    <property type="entry name" value="NAD_kinase"/>
    <property type="match status" value="1"/>
</dbReference>
<dbReference type="InterPro" id="IPR017438">
    <property type="entry name" value="ATP-NAD_kinase_N"/>
</dbReference>
<dbReference type="InterPro" id="IPR017437">
    <property type="entry name" value="ATP-NAD_kinase_PpnK-typ_C"/>
</dbReference>
<dbReference type="InterPro" id="IPR016064">
    <property type="entry name" value="NAD/diacylglycerol_kinase_sf"/>
</dbReference>
<dbReference type="InterPro" id="IPR002504">
    <property type="entry name" value="NADK"/>
</dbReference>
<dbReference type="NCBIfam" id="NF002306">
    <property type="entry name" value="PRK01231.1"/>
    <property type="match status" value="1"/>
</dbReference>
<dbReference type="NCBIfam" id="NF003391">
    <property type="entry name" value="PRK04539.1"/>
    <property type="match status" value="1"/>
</dbReference>
<dbReference type="PANTHER" id="PTHR20275">
    <property type="entry name" value="NAD KINASE"/>
    <property type="match status" value="1"/>
</dbReference>
<dbReference type="PANTHER" id="PTHR20275:SF0">
    <property type="entry name" value="NAD KINASE"/>
    <property type="match status" value="1"/>
</dbReference>
<dbReference type="Pfam" id="PF01513">
    <property type="entry name" value="NAD_kinase"/>
    <property type="match status" value="1"/>
</dbReference>
<dbReference type="Pfam" id="PF20143">
    <property type="entry name" value="NAD_kinase_C"/>
    <property type="match status" value="1"/>
</dbReference>
<dbReference type="SUPFAM" id="SSF111331">
    <property type="entry name" value="NAD kinase/diacylglycerol kinase-like"/>
    <property type="match status" value="1"/>
</dbReference>
<comment type="function">
    <text evidence="1">Involved in the regulation of the intracellular balance of NAD and NADP, and is a key enzyme in the biosynthesis of NADP. Catalyzes specifically the phosphorylation on 2'-hydroxyl of the adenosine moiety of NAD to yield NADP.</text>
</comment>
<comment type="catalytic activity">
    <reaction evidence="1">
        <text>NAD(+) + ATP = ADP + NADP(+) + H(+)</text>
        <dbReference type="Rhea" id="RHEA:18629"/>
        <dbReference type="ChEBI" id="CHEBI:15378"/>
        <dbReference type="ChEBI" id="CHEBI:30616"/>
        <dbReference type="ChEBI" id="CHEBI:57540"/>
        <dbReference type="ChEBI" id="CHEBI:58349"/>
        <dbReference type="ChEBI" id="CHEBI:456216"/>
        <dbReference type="EC" id="2.7.1.23"/>
    </reaction>
</comment>
<comment type="cofactor">
    <cofactor evidence="1">
        <name>a divalent metal cation</name>
        <dbReference type="ChEBI" id="CHEBI:60240"/>
    </cofactor>
</comment>
<comment type="subcellular location">
    <subcellularLocation>
        <location evidence="1">Cytoplasm</location>
    </subcellularLocation>
</comment>
<comment type="similarity">
    <text evidence="1">Belongs to the NAD kinase family.</text>
</comment>
<evidence type="ECO:0000255" key="1">
    <source>
        <dbReference type="HAMAP-Rule" id="MF_00361"/>
    </source>
</evidence>
<proteinExistence type="inferred from homology"/>
<gene>
    <name evidence="1" type="primary">nadK</name>
    <name type="ordered locus">NMA1017</name>
</gene>
<organism>
    <name type="scientific">Neisseria meningitidis serogroup A / serotype 4A (strain DSM 15465 / Z2491)</name>
    <dbReference type="NCBI Taxonomy" id="122587"/>
    <lineage>
        <taxon>Bacteria</taxon>
        <taxon>Pseudomonadati</taxon>
        <taxon>Pseudomonadota</taxon>
        <taxon>Betaproteobacteria</taxon>
        <taxon>Neisseriales</taxon>
        <taxon>Neisseriaceae</taxon>
        <taxon>Neisseria</taxon>
    </lineage>
</organism>
<keyword id="KW-0067">ATP-binding</keyword>
<keyword id="KW-0963">Cytoplasm</keyword>
<keyword id="KW-0418">Kinase</keyword>
<keyword id="KW-0520">NAD</keyword>
<keyword id="KW-0521">NADP</keyword>
<keyword id="KW-0547">Nucleotide-binding</keyword>
<keyword id="KW-0808">Transferase</keyword>